<comment type="function">
    <text evidence="1">F(1)F(0) ATP synthase produces ATP from ADP in the presence of a proton or sodium gradient. F-type ATPases consist of two structural domains, F(1) containing the extramembraneous catalytic core and F(0) containing the membrane proton channel, linked together by a central stalk and a peripheral stalk. During catalysis, ATP synthesis in the catalytic domain of F(1) is coupled via a rotary mechanism of the central stalk subunits to proton translocation.</text>
</comment>
<comment type="function">
    <text evidence="1">Key component of the F(0) channel; it plays a direct role in translocation across the membrane. A homomeric c-ring of between 10-14 subunits forms the central stalk rotor element with the F(1) delta and epsilon subunits.</text>
</comment>
<comment type="subunit">
    <text evidence="1">F-type ATPases have 2 components, F(1) - the catalytic core - and F(0) - the membrane proton channel. F(1) has five subunits: alpha(3), beta(3), gamma(1), delta(1), epsilon(1). F(0) has three main subunits: a(1), b(2) and c(10-14). The alpha and beta chains form an alternating ring which encloses part of the gamma chain. F(1) is attached to F(0) by a central stalk formed by the gamma and epsilon chains, while a peripheral stalk is formed by the delta and b chains.</text>
</comment>
<comment type="subcellular location">
    <subcellularLocation>
        <location evidence="1">Cell inner membrane</location>
        <topology evidence="1">Multi-pass membrane protein</topology>
    </subcellularLocation>
</comment>
<comment type="similarity">
    <text evidence="1">Belongs to the ATPase C chain family.</text>
</comment>
<gene>
    <name evidence="1" type="primary">atpE</name>
    <name type="ordered locus">BT_0715</name>
</gene>
<keyword id="KW-0066">ATP synthesis</keyword>
<keyword id="KW-0997">Cell inner membrane</keyword>
<keyword id="KW-1003">Cell membrane</keyword>
<keyword id="KW-0138">CF(0)</keyword>
<keyword id="KW-0375">Hydrogen ion transport</keyword>
<keyword id="KW-0406">Ion transport</keyword>
<keyword id="KW-0446">Lipid-binding</keyword>
<keyword id="KW-0472">Membrane</keyword>
<keyword id="KW-1185">Reference proteome</keyword>
<keyword id="KW-0812">Transmembrane</keyword>
<keyword id="KW-1133">Transmembrane helix</keyword>
<keyword id="KW-0813">Transport</keyword>
<dbReference type="EMBL" id="AE015928">
    <property type="protein sequence ID" value="AAO75822.1"/>
    <property type="molecule type" value="Genomic_DNA"/>
</dbReference>
<dbReference type="RefSeq" id="NP_809628.1">
    <property type="nucleotide sequence ID" value="NC_004663.1"/>
</dbReference>
<dbReference type="RefSeq" id="WP_004295758.1">
    <property type="nucleotide sequence ID" value="NZ_UYXG01000002.1"/>
</dbReference>
<dbReference type="SMR" id="Q8A9V0"/>
<dbReference type="FunCoup" id="Q8A9V0">
    <property type="interactions" value="154"/>
</dbReference>
<dbReference type="STRING" id="226186.BT_0715"/>
<dbReference type="PaxDb" id="226186-BT_0715"/>
<dbReference type="EnsemblBacteria" id="AAO75822">
    <property type="protein sequence ID" value="AAO75822"/>
    <property type="gene ID" value="BT_0715"/>
</dbReference>
<dbReference type="GeneID" id="92987826"/>
<dbReference type="KEGG" id="bth:BT_0715"/>
<dbReference type="PATRIC" id="fig|226186.12.peg.730"/>
<dbReference type="eggNOG" id="COG0636">
    <property type="taxonomic scope" value="Bacteria"/>
</dbReference>
<dbReference type="HOGENOM" id="CLU_148047_5_1_10"/>
<dbReference type="InParanoid" id="Q8A9V0"/>
<dbReference type="Proteomes" id="UP000001414">
    <property type="component" value="Chromosome"/>
</dbReference>
<dbReference type="GO" id="GO:0005886">
    <property type="term" value="C:plasma membrane"/>
    <property type="evidence" value="ECO:0007669"/>
    <property type="project" value="UniProtKB-SubCell"/>
</dbReference>
<dbReference type="GO" id="GO:0045259">
    <property type="term" value="C:proton-transporting ATP synthase complex"/>
    <property type="evidence" value="ECO:0007669"/>
    <property type="project" value="UniProtKB-KW"/>
</dbReference>
<dbReference type="GO" id="GO:0033177">
    <property type="term" value="C:proton-transporting two-sector ATPase complex, proton-transporting domain"/>
    <property type="evidence" value="ECO:0007669"/>
    <property type="project" value="InterPro"/>
</dbReference>
<dbReference type="GO" id="GO:0008289">
    <property type="term" value="F:lipid binding"/>
    <property type="evidence" value="ECO:0007669"/>
    <property type="project" value="UniProtKB-KW"/>
</dbReference>
<dbReference type="GO" id="GO:0046933">
    <property type="term" value="F:proton-transporting ATP synthase activity, rotational mechanism"/>
    <property type="evidence" value="ECO:0007669"/>
    <property type="project" value="UniProtKB-UniRule"/>
</dbReference>
<dbReference type="GO" id="GO:0015986">
    <property type="term" value="P:proton motive force-driven ATP synthesis"/>
    <property type="evidence" value="ECO:0000318"/>
    <property type="project" value="GO_Central"/>
</dbReference>
<dbReference type="CDD" id="cd18121">
    <property type="entry name" value="ATP-synt_Fo_c"/>
    <property type="match status" value="1"/>
</dbReference>
<dbReference type="FunFam" id="1.20.20.10:FF:000007">
    <property type="entry name" value="ATP synthase subunit c"/>
    <property type="match status" value="1"/>
</dbReference>
<dbReference type="Gene3D" id="1.20.20.10">
    <property type="entry name" value="F1F0 ATP synthase subunit C"/>
    <property type="match status" value="1"/>
</dbReference>
<dbReference type="HAMAP" id="MF_01396">
    <property type="entry name" value="ATP_synth_c_bact"/>
    <property type="match status" value="1"/>
</dbReference>
<dbReference type="InterPro" id="IPR005953">
    <property type="entry name" value="ATP_synth_csu_bac/chlpt"/>
</dbReference>
<dbReference type="InterPro" id="IPR000454">
    <property type="entry name" value="ATP_synth_F0_csu"/>
</dbReference>
<dbReference type="InterPro" id="IPR020537">
    <property type="entry name" value="ATP_synth_F0_csu_DDCD_BS"/>
</dbReference>
<dbReference type="InterPro" id="IPR038662">
    <property type="entry name" value="ATP_synth_F0_csu_sf"/>
</dbReference>
<dbReference type="InterPro" id="IPR002379">
    <property type="entry name" value="ATPase_proteolipid_c-like_dom"/>
</dbReference>
<dbReference type="InterPro" id="IPR035921">
    <property type="entry name" value="F/V-ATP_Csub_sf"/>
</dbReference>
<dbReference type="NCBIfam" id="TIGR01260">
    <property type="entry name" value="ATP_synt_c"/>
    <property type="match status" value="1"/>
</dbReference>
<dbReference type="PANTHER" id="PTHR10031">
    <property type="entry name" value="ATP SYNTHASE LIPID-BINDING PROTEIN, MITOCHONDRIAL"/>
    <property type="match status" value="1"/>
</dbReference>
<dbReference type="PANTHER" id="PTHR10031:SF0">
    <property type="entry name" value="ATPASE PROTEIN 9"/>
    <property type="match status" value="1"/>
</dbReference>
<dbReference type="Pfam" id="PF00137">
    <property type="entry name" value="ATP-synt_C"/>
    <property type="match status" value="1"/>
</dbReference>
<dbReference type="PRINTS" id="PR00124">
    <property type="entry name" value="ATPASEC"/>
</dbReference>
<dbReference type="SUPFAM" id="SSF81333">
    <property type="entry name" value="F1F0 ATP synthase subunit C"/>
    <property type="match status" value="1"/>
</dbReference>
<dbReference type="PROSITE" id="PS00605">
    <property type="entry name" value="ATPASE_C"/>
    <property type="match status" value="1"/>
</dbReference>
<evidence type="ECO:0000255" key="1">
    <source>
        <dbReference type="HAMAP-Rule" id="MF_01396"/>
    </source>
</evidence>
<feature type="chain" id="PRO_1000184333" description="ATP synthase subunit c">
    <location>
        <begin position="1"/>
        <end position="85"/>
    </location>
</feature>
<feature type="transmembrane region" description="Helical" evidence="1">
    <location>
        <begin position="22"/>
        <end position="39"/>
    </location>
</feature>
<feature type="transmembrane region" description="Helical" evidence="1">
    <location>
        <begin position="65"/>
        <end position="85"/>
    </location>
</feature>
<feature type="site" description="Reversibly protonated during proton transport" evidence="1">
    <location>
        <position position="69"/>
    </location>
</feature>
<accession>Q8A9V0</accession>
<name>ATPL_BACTN</name>
<sequence>MLLSVLLQATAAAVGVSKLGAAIGAGLAVIGAGLGIGKIGGSAMEAIARQPEASGDIRMNMIIAAALIEGVALLAVVVCLLVFFL</sequence>
<protein>
    <recommendedName>
        <fullName evidence="1">ATP synthase subunit c</fullName>
    </recommendedName>
    <alternativeName>
        <fullName evidence="1">ATP synthase F(0) sector subunit c</fullName>
    </alternativeName>
    <alternativeName>
        <fullName evidence="1">F-type ATPase subunit c</fullName>
        <shortName evidence="1">F-ATPase subunit c</shortName>
    </alternativeName>
    <alternativeName>
        <fullName evidence="1">Lipid-binding protein</fullName>
    </alternativeName>
</protein>
<proteinExistence type="inferred from homology"/>
<organism>
    <name type="scientific">Bacteroides thetaiotaomicron (strain ATCC 29148 / DSM 2079 / JCM 5827 / CCUG 10774 / NCTC 10582 / VPI-5482 / E50)</name>
    <dbReference type="NCBI Taxonomy" id="226186"/>
    <lineage>
        <taxon>Bacteria</taxon>
        <taxon>Pseudomonadati</taxon>
        <taxon>Bacteroidota</taxon>
        <taxon>Bacteroidia</taxon>
        <taxon>Bacteroidales</taxon>
        <taxon>Bacteroidaceae</taxon>
        <taxon>Bacteroides</taxon>
    </lineage>
</organism>
<reference key="1">
    <citation type="journal article" date="2003" name="Science">
        <title>A genomic view of the human-Bacteroides thetaiotaomicron symbiosis.</title>
        <authorList>
            <person name="Xu J."/>
            <person name="Bjursell M.K."/>
            <person name="Himrod J."/>
            <person name="Deng S."/>
            <person name="Carmichael L.K."/>
            <person name="Chiang H.C."/>
            <person name="Hooper L.V."/>
            <person name="Gordon J.I."/>
        </authorList>
    </citation>
    <scope>NUCLEOTIDE SEQUENCE [LARGE SCALE GENOMIC DNA]</scope>
    <source>
        <strain>ATCC 29148 / DSM 2079 / JCM 5827 / CCUG 10774 / NCTC 10582 / VPI-5482 / E50</strain>
    </source>
</reference>